<comment type="subcellular location">
    <subcellularLocation>
        <location evidence="4">Cell membrane</location>
        <topology evidence="4">Multi-pass membrane protein</topology>
    </subcellularLocation>
</comment>
<comment type="similarity">
    <text evidence="4">Belongs to the TerC family.</text>
</comment>
<name>Y1841_MYCTO</name>
<organism>
    <name type="scientific">Mycobacterium tuberculosis (strain CDC 1551 / Oshkosh)</name>
    <dbReference type="NCBI Taxonomy" id="83331"/>
    <lineage>
        <taxon>Bacteria</taxon>
        <taxon>Bacillati</taxon>
        <taxon>Actinomycetota</taxon>
        <taxon>Actinomycetes</taxon>
        <taxon>Mycobacteriales</taxon>
        <taxon>Mycobacteriaceae</taxon>
        <taxon>Mycobacterium</taxon>
        <taxon>Mycobacterium tuberculosis complex</taxon>
    </lineage>
</organism>
<reference key="1">
    <citation type="journal article" date="2002" name="J. Bacteriol.">
        <title>Whole-genome comparison of Mycobacterium tuberculosis clinical and laboratory strains.</title>
        <authorList>
            <person name="Fleischmann R.D."/>
            <person name="Alland D."/>
            <person name="Eisen J.A."/>
            <person name="Carpenter L."/>
            <person name="White O."/>
            <person name="Peterson J.D."/>
            <person name="DeBoy R.T."/>
            <person name="Dodson R.J."/>
            <person name="Gwinn M.L."/>
            <person name="Haft D.H."/>
            <person name="Hickey E.K."/>
            <person name="Kolonay J.F."/>
            <person name="Nelson W.C."/>
            <person name="Umayam L.A."/>
            <person name="Ermolaeva M.D."/>
            <person name="Salzberg S.L."/>
            <person name="Delcher A."/>
            <person name="Utterback T.R."/>
            <person name="Weidman J.F."/>
            <person name="Khouri H.M."/>
            <person name="Gill J."/>
            <person name="Mikula A."/>
            <person name="Bishai W."/>
            <person name="Jacobs W.R. Jr."/>
            <person name="Venter J.C."/>
            <person name="Fraser C.M."/>
        </authorList>
    </citation>
    <scope>NUCLEOTIDE SEQUENCE [LARGE SCALE GENOMIC DNA]</scope>
    <source>
        <strain>CDC 1551 / Oshkosh</strain>
    </source>
</reference>
<gene>
    <name type="ordered locus">MT1889</name>
</gene>
<sequence length="345" mass="36637">MDVLSAVLLALLLIGANAFFVGAEFALISARRDRLEALAEQGKATAVTVIRAGEQLPAMLTGAQLGVTVSSILLGRVGEPAVVKLLQLSFGLSGVPPALLHTLSLAIVVALHVLLGEMVPKNIALAGPERTAMLLVPPYLVYVRLARPFIAVYNNCANAILRLVGVQPKDELDIAVSTAELSEMIAESLSEGLLDHEEHTRLTRALRIRTRLVADVAVPLVNIRAVQVSAVGSGPTIGGVEQALAQTGYSRFPVVDRGGRFIGYLHIKDVLTLGDNPQTVIDLAVVRPLPRVPQSLPLADALSRMRRINSHLALVTADNGSVVGMVALEDVVEDLVGTMRDGTHR</sequence>
<proteinExistence type="inferred from homology"/>
<feature type="chain" id="PRO_0000427437" description="Uncharacterized protein MT1889">
    <location>
        <begin position="1"/>
        <end position="345"/>
    </location>
</feature>
<feature type="transmembrane region" description="Helical" evidence="1">
    <location>
        <begin position="3"/>
        <end position="23"/>
    </location>
</feature>
<feature type="transmembrane region" description="Helical" evidence="1">
    <location>
        <begin position="95"/>
        <end position="115"/>
    </location>
</feature>
<feature type="transmembrane region" description="Helical" evidence="1">
    <location>
        <begin position="312"/>
        <end position="332"/>
    </location>
</feature>
<feature type="domain" description="CNNM transmembrane" evidence="3">
    <location>
        <begin position="1"/>
        <end position="198"/>
    </location>
</feature>
<feature type="domain" description="CBS 1" evidence="2">
    <location>
        <begin position="217"/>
        <end position="280"/>
    </location>
</feature>
<feature type="domain" description="CBS 2" evidence="2">
    <location>
        <begin position="285"/>
        <end position="342"/>
    </location>
</feature>
<accession>P9WLQ6</accession>
<accession>L0T7V1</accession>
<accession>Q50593</accession>
<protein>
    <recommendedName>
        <fullName>Uncharacterized protein MT1889</fullName>
    </recommendedName>
</protein>
<evidence type="ECO:0000255" key="1"/>
<evidence type="ECO:0000255" key="2">
    <source>
        <dbReference type="PROSITE-ProRule" id="PRU00703"/>
    </source>
</evidence>
<evidence type="ECO:0000255" key="3">
    <source>
        <dbReference type="PROSITE-ProRule" id="PRU01193"/>
    </source>
</evidence>
<evidence type="ECO:0000305" key="4"/>
<keyword id="KW-1003">Cell membrane</keyword>
<keyword id="KW-0472">Membrane</keyword>
<keyword id="KW-1185">Reference proteome</keyword>
<keyword id="KW-0677">Repeat</keyword>
<keyword id="KW-0812">Transmembrane</keyword>
<keyword id="KW-1133">Transmembrane helix</keyword>
<dbReference type="EMBL" id="AE000516">
    <property type="protein sequence ID" value="AAK46160.1"/>
    <property type="molecule type" value="Genomic_DNA"/>
</dbReference>
<dbReference type="PIR" id="A70664">
    <property type="entry name" value="A70664"/>
</dbReference>
<dbReference type="RefSeq" id="WP_003917538.1">
    <property type="nucleotide sequence ID" value="NC_002755.2"/>
</dbReference>
<dbReference type="SMR" id="P9WLQ6"/>
<dbReference type="KEGG" id="mtc:MT1889"/>
<dbReference type="PATRIC" id="fig|83331.31.peg.2033"/>
<dbReference type="HOGENOM" id="CLU_015237_4_0_11"/>
<dbReference type="Proteomes" id="UP000001020">
    <property type="component" value="Chromosome"/>
</dbReference>
<dbReference type="GO" id="GO:0005886">
    <property type="term" value="C:plasma membrane"/>
    <property type="evidence" value="ECO:0007669"/>
    <property type="project" value="UniProtKB-SubCell"/>
</dbReference>
<dbReference type="CDD" id="cd04590">
    <property type="entry name" value="CBS_pair_CorC_HlyC_assoc"/>
    <property type="match status" value="1"/>
</dbReference>
<dbReference type="Gene3D" id="3.10.580.10">
    <property type="entry name" value="CBS-domain"/>
    <property type="match status" value="1"/>
</dbReference>
<dbReference type="InterPro" id="IPR000644">
    <property type="entry name" value="CBS_dom"/>
</dbReference>
<dbReference type="InterPro" id="IPR046342">
    <property type="entry name" value="CBS_dom_sf"/>
</dbReference>
<dbReference type="InterPro" id="IPR002550">
    <property type="entry name" value="CNNM"/>
</dbReference>
<dbReference type="InterPro" id="IPR044751">
    <property type="entry name" value="Ion_transp-like_CBS"/>
</dbReference>
<dbReference type="InterPro" id="IPR051676">
    <property type="entry name" value="UPF0053_domain"/>
</dbReference>
<dbReference type="PANTHER" id="PTHR43099:SF5">
    <property type="entry name" value="HLYC_CORC FAMILY TRANSPORTER"/>
    <property type="match status" value="1"/>
</dbReference>
<dbReference type="PANTHER" id="PTHR43099">
    <property type="entry name" value="UPF0053 PROTEIN YRKA"/>
    <property type="match status" value="1"/>
</dbReference>
<dbReference type="Pfam" id="PF00571">
    <property type="entry name" value="CBS"/>
    <property type="match status" value="2"/>
</dbReference>
<dbReference type="Pfam" id="PF01595">
    <property type="entry name" value="CNNM"/>
    <property type="match status" value="1"/>
</dbReference>
<dbReference type="SMART" id="SM00116">
    <property type="entry name" value="CBS"/>
    <property type="match status" value="2"/>
</dbReference>
<dbReference type="SUPFAM" id="SSF54631">
    <property type="entry name" value="CBS-domain pair"/>
    <property type="match status" value="1"/>
</dbReference>
<dbReference type="PROSITE" id="PS51371">
    <property type="entry name" value="CBS"/>
    <property type="match status" value="2"/>
</dbReference>
<dbReference type="PROSITE" id="PS51846">
    <property type="entry name" value="CNNM"/>
    <property type="match status" value="1"/>
</dbReference>